<sequence>MEMFTFLLTCIFLPLLRGHSLFTCEPITVPRCMKMAYNMTFFPNLMGHYDQSIAAVEMEHFLPLANLECSPNIETFLCKAFVPTCIEQIHVVPPCRKLCEKVYSDCKKLIDTFGIRWPEELECDRLQYCDETVPVTFDPHTEFLGPQKKTEQVQRDIGFWCPRHLKTSGGQGYKFLGIDQCAPPCPNMYFKSDELEFAKSFIGTVSIFCLCATLFTFLTFLIDVRRFRYPERPIIYYSVCYSIVSLMYFIGFLLGDSTACNKADEKLELGDTVVLGSQNKACTVLFMLLYFFTMAGTVWWVILTITWFLAAGRKWSCEAIEQKAVWFHAVAWGTPGFLTVMLLAMNKVEGDNISGVCFVGLYDLDASRYFVLLPLCLCVFVGLSLLLAGIISLNHVRQVIQHDGRNQEKLKKFMIRIGVFSGLYLVPLVTLLGCYVYEQVNRITWEITWVSDHCRQYHIPCPYQAKAKARPELALFMIKYLMTLIVGISAVFWVGSKKTCTEWAGFFKRNRKRDPISESRRVLQESCEFFLKHNSKVKHKKKHYKPSSHKLKVISKSMGTSTGATANHGTSAVAITSHDYLGQETLTEIQTSPETSMREVKADGASTPRLREQDCGEPASPAASISRLSGEQVDGKGQAGSVSESARSEGRISPKSDITDTGLAQSNNLQVPSSSEPSSLKGSTSLLVHPVSGVRKEQGGGCHSDT</sequence>
<gene>
    <name type="primary">FZD6</name>
</gene>
<accession>O60353</accession>
<accession>B4DRN0</accession>
<accession>Q6N0A5</accession>
<accession>Q6P9C3</accession>
<accession>Q8WXR9</accession>
<protein>
    <recommendedName>
        <fullName>Frizzled-6</fullName>
        <shortName>Fz-6</shortName>
        <shortName>hFz6</shortName>
    </recommendedName>
</protein>
<name>FZD6_HUMAN</name>
<feature type="signal peptide" evidence="3">
    <location>
        <begin position="1"/>
        <end position="18"/>
    </location>
</feature>
<feature type="chain" id="PRO_0000012994" description="Frizzled-6">
    <location>
        <begin position="19"/>
        <end position="706"/>
    </location>
</feature>
<feature type="topological domain" description="Extracellular" evidence="3">
    <location>
        <begin position="19"/>
        <end position="201"/>
    </location>
</feature>
<feature type="transmembrane region" description="Helical; Name=1" evidence="3">
    <location>
        <begin position="202"/>
        <end position="222"/>
    </location>
</feature>
<feature type="topological domain" description="Cytoplasmic" evidence="3">
    <location>
        <begin position="223"/>
        <end position="233"/>
    </location>
</feature>
<feature type="transmembrane region" description="Helical; Name=2" evidence="3">
    <location>
        <begin position="234"/>
        <end position="254"/>
    </location>
</feature>
<feature type="topological domain" description="Extracellular" evidence="3">
    <location>
        <begin position="255"/>
        <end position="284"/>
    </location>
</feature>
<feature type="transmembrane region" description="Helical; Name=3" evidence="3">
    <location>
        <begin position="285"/>
        <end position="305"/>
    </location>
</feature>
<feature type="topological domain" description="Cytoplasmic" evidence="3">
    <location>
        <begin position="306"/>
        <end position="324"/>
    </location>
</feature>
<feature type="transmembrane region" description="Helical; Name=4" evidence="3">
    <location>
        <begin position="325"/>
        <end position="345"/>
    </location>
</feature>
<feature type="topological domain" description="Extracellular" evidence="3">
    <location>
        <begin position="346"/>
        <end position="370"/>
    </location>
</feature>
<feature type="transmembrane region" description="Helical; Name=5" evidence="3">
    <location>
        <begin position="371"/>
        <end position="391"/>
    </location>
</feature>
<feature type="topological domain" description="Cytoplasmic" evidence="3">
    <location>
        <begin position="392"/>
        <end position="416"/>
    </location>
</feature>
<feature type="transmembrane region" description="Helical; Name=6" evidence="3">
    <location>
        <begin position="417"/>
        <end position="437"/>
    </location>
</feature>
<feature type="topological domain" description="Extracellular" evidence="3">
    <location>
        <begin position="438"/>
        <end position="473"/>
    </location>
</feature>
<feature type="transmembrane region" description="Helical; Name=7" evidence="3">
    <location>
        <begin position="474"/>
        <end position="494"/>
    </location>
</feature>
<feature type="topological domain" description="Cytoplasmic" evidence="3">
    <location>
        <begin position="495"/>
        <end position="706"/>
    </location>
</feature>
<feature type="domain" description="FZ" evidence="4">
    <location>
        <begin position="19"/>
        <end position="132"/>
    </location>
</feature>
<feature type="region of interest" description="Disordered" evidence="5">
    <location>
        <begin position="588"/>
        <end position="706"/>
    </location>
</feature>
<feature type="short sequence motif" description="Lys-Thr-X-X-X-Trp motif, mediates interaction with the PDZ domain of Dvl family members" evidence="1">
    <location>
        <begin position="498"/>
        <end position="503"/>
    </location>
</feature>
<feature type="compositionally biased region" description="Basic and acidic residues" evidence="5">
    <location>
        <begin position="646"/>
        <end position="658"/>
    </location>
</feature>
<feature type="compositionally biased region" description="Polar residues" evidence="5">
    <location>
        <begin position="662"/>
        <end position="672"/>
    </location>
</feature>
<feature type="compositionally biased region" description="Low complexity" evidence="5">
    <location>
        <begin position="673"/>
        <end position="685"/>
    </location>
</feature>
<feature type="compositionally biased region" description="Basic and acidic residues" evidence="5">
    <location>
        <begin position="694"/>
        <end position="706"/>
    </location>
</feature>
<feature type="modified residue" description="Phosphoserine" evidence="2">
    <location>
        <position position="653"/>
    </location>
</feature>
<feature type="glycosylation site" description="N-linked (GlcNAc...) asparagine" evidence="3">
    <location>
        <position position="38"/>
    </location>
</feature>
<feature type="glycosylation site" description="N-linked (GlcNAc...) asparagine" evidence="3">
    <location>
        <position position="352"/>
    </location>
</feature>
<feature type="disulfide bond" evidence="4">
    <location>
        <begin position="24"/>
        <end position="85"/>
    </location>
</feature>
<feature type="disulfide bond" evidence="4">
    <location>
        <begin position="32"/>
        <end position="78"/>
    </location>
</feature>
<feature type="disulfide bond" evidence="4">
    <location>
        <begin position="69"/>
        <end position="106"/>
    </location>
</feature>
<feature type="disulfide bond" evidence="4">
    <location>
        <begin position="95"/>
        <end position="129"/>
    </location>
</feature>
<feature type="disulfide bond" evidence="4">
    <location>
        <begin position="99"/>
        <end position="123"/>
    </location>
</feature>
<feature type="splice variant" id="VSP_044291" description="In isoform 2." evidence="12">
    <location>
        <begin position="1"/>
        <end position="32"/>
    </location>
</feature>
<feature type="sequence variant" id="VAR_047440" description="In dbSNP:rs827528." evidence="7 9">
    <original>M</original>
    <variation>V</variation>
    <location>
        <position position="33"/>
    </location>
</feature>
<feature type="sequence variant" id="VAR_066963" description="In dbSNP:rs80216383." evidence="9">
    <original>H</original>
    <variation>Y</variation>
    <location>
        <position position="140"/>
    </location>
</feature>
<feature type="sequence variant" id="VAR_066964" description="In dbSNP:rs61753730." evidence="9">
    <original>Q</original>
    <variation>E</variation>
    <location>
        <position position="152"/>
    </location>
</feature>
<feature type="sequence variant" id="VAR_047441" description="In dbSNP:rs3808553." evidence="6 9 10 11">
    <original>M</original>
    <variation>L</variation>
    <location>
        <position position="345"/>
    </location>
</feature>
<feature type="sequence variant" id="VAR_066965" description="In dbSNP:rs142694816." evidence="9">
    <original>A</original>
    <variation>D</variation>
    <location>
        <position position="388"/>
    </location>
</feature>
<feature type="sequence variant" id="VAR_066966" description="In dbSNP:rs150760762." evidence="9">
    <original>R</original>
    <variation>Q</variation>
    <location>
        <position position="405"/>
    </location>
</feature>
<feature type="sequence variant" id="VAR_066398" description="In NDNC1; also found in a patient with neural tube defects; the mutant protein localizes to the lysosomes compared to wild-type; dbSNP:rs151339003." evidence="8 9">
    <original>R</original>
    <variation>C</variation>
    <location>
        <position position="511"/>
    </location>
</feature>
<feature type="sequence variant" id="VAR_066967" description="In a patient with neural tube defects; dbSNP:rs767273753." evidence="9">
    <original>R</original>
    <variation>H</variation>
    <location>
        <position position="511"/>
    </location>
</feature>
<feature type="sequence variant" id="VAR_066968" description="In dbSNP:rs79408516." evidence="9">
    <original>G</original>
    <variation>R</variation>
    <location>
        <position position="604"/>
    </location>
</feature>
<feature type="sequence variant" id="VAR_066969" description="In dbSNP:rs116195528." evidence="9">
    <original>S</original>
    <variation>T</variation>
    <location>
        <position position="620"/>
    </location>
</feature>
<feature type="sequence variant" id="VAR_047442" description="In dbSNP:rs12549394." evidence="9">
    <original>A</original>
    <variation>E</variation>
    <location>
        <position position="664"/>
    </location>
</feature>
<feature type="strand" evidence="14">
    <location>
        <begin position="163"/>
        <end position="165"/>
    </location>
</feature>
<feature type="helix" evidence="14">
    <location>
        <begin position="175"/>
        <end position="177"/>
    </location>
</feature>
<feature type="strand" evidence="14">
    <location>
        <begin position="178"/>
        <end position="180"/>
    </location>
</feature>
<feature type="strand" evidence="14">
    <location>
        <begin position="184"/>
        <end position="186"/>
    </location>
</feature>
<feature type="helix" evidence="14">
    <location>
        <begin position="193"/>
        <end position="210"/>
    </location>
</feature>
<feature type="turn" evidence="14">
    <location>
        <begin position="211"/>
        <end position="213"/>
    </location>
</feature>
<feature type="helix" evidence="14">
    <location>
        <begin position="214"/>
        <end position="223"/>
    </location>
</feature>
<feature type="strand" evidence="14">
    <location>
        <begin position="225"/>
        <end position="227"/>
    </location>
</feature>
<feature type="helix" evidence="14">
    <location>
        <begin position="229"/>
        <end position="232"/>
    </location>
</feature>
<feature type="helix" evidence="14">
    <location>
        <begin position="233"/>
        <end position="254"/>
    </location>
</feature>
<feature type="strand" evidence="14">
    <location>
        <begin position="256"/>
        <end position="261"/>
    </location>
</feature>
<feature type="strand" evidence="14">
    <location>
        <begin position="265"/>
        <end position="268"/>
    </location>
</feature>
<feature type="strand" evidence="14">
    <location>
        <begin position="275"/>
        <end position="279"/>
    </location>
</feature>
<feature type="turn" evidence="14">
    <location>
        <begin position="280"/>
        <end position="282"/>
    </location>
</feature>
<feature type="helix" evidence="14">
    <location>
        <begin position="283"/>
        <end position="311"/>
    </location>
</feature>
<feature type="helix" evidence="14">
    <location>
        <begin position="317"/>
        <end position="321"/>
    </location>
</feature>
<feature type="helix" evidence="14">
    <location>
        <begin position="324"/>
        <end position="331"/>
    </location>
</feature>
<feature type="helix" evidence="14">
    <location>
        <begin position="334"/>
        <end position="341"/>
    </location>
</feature>
<feature type="turn" evidence="14">
    <location>
        <begin position="342"/>
        <end position="346"/>
    </location>
</feature>
<feature type="strand" evidence="14">
    <location>
        <begin position="352"/>
        <end position="355"/>
    </location>
</feature>
<feature type="strand" evidence="14">
    <location>
        <begin position="358"/>
        <end position="362"/>
    </location>
</feature>
<feature type="helix" evidence="14">
    <location>
        <begin position="365"/>
        <end position="370"/>
    </location>
</feature>
<feature type="helix" evidence="14">
    <location>
        <begin position="372"/>
        <end position="394"/>
    </location>
</feature>
<feature type="strand" evidence="15">
    <location>
        <begin position="402"/>
        <end position="404"/>
    </location>
</feature>
<feature type="helix" evidence="14">
    <location>
        <begin position="411"/>
        <end position="439"/>
    </location>
</feature>
<feature type="helix" evidence="14">
    <location>
        <begin position="442"/>
        <end position="452"/>
    </location>
</feature>
<feature type="turn" evidence="14">
    <location>
        <begin position="453"/>
        <end position="456"/>
    </location>
</feature>
<feature type="helix" evidence="14">
    <location>
        <begin position="473"/>
        <end position="485"/>
    </location>
</feature>
<feature type="helix" evidence="14">
    <location>
        <begin position="486"/>
        <end position="488"/>
    </location>
</feature>
<feature type="turn" evidence="14">
    <location>
        <begin position="489"/>
        <end position="493"/>
    </location>
</feature>
<organism>
    <name type="scientific">Homo sapiens</name>
    <name type="common">Human</name>
    <dbReference type="NCBI Taxonomy" id="9606"/>
    <lineage>
        <taxon>Eukaryota</taxon>
        <taxon>Metazoa</taxon>
        <taxon>Chordata</taxon>
        <taxon>Craniata</taxon>
        <taxon>Vertebrata</taxon>
        <taxon>Euteleostomi</taxon>
        <taxon>Mammalia</taxon>
        <taxon>Eutheria</taxon>
        <taxon>Euarchontoglires</taxon>
        <taxon>Primates</taxon>
        <taxon>Haplorrhini</taxon>
        <taxon>Catarrhini</taxon>
        <taxon>Hominidae</taxon>
        <taxon>Homo</taxon>
    </lineage>
</organism>
<comment type="function">
    <text evidence="2">Receptor for Wnt proteins. Most of frizzled receptors are coupled to the beta-catenin canonical signaling pathway, which leads to the activation of disheveled proteins, inhibition of GSK-3 kinase, nuclear accumulation of beta-catenin and activation of Wnt target genes. A second signaling pathway involving PKC and calcium fluxes has been seen for some family members, but it is not yet clear if it represents a distinct pathway or if it can be integrated in the canonical pathway, as PKC seems to be required for Wnt-mediated inactivation of GSK-3 kinase. Both pathways seem to involve interactions with G-proteins. May be involved in transduction and intercellular transmission of polarity information during tissue morphogenesis and/or in differentiated tissues. Together with FZD3, is involved in the neural tube closure and plays a role in the regulation of the establishment of planar cell polarity (PCP), particularly in the orientation of asymmetric bundles of stereocilia on the apical faces of a subset of auditory and vestibular sensory cells located in the inner ear (By similarity).</text>
</comment>
<comment type="subunit">
    <text evidence="2">Interacts with LMBR1L.</text>
</comment>
<comment type="interaction">
    <interactant intactId="EBI-8754490">
        <id>O60353</id>
    </interactant>
    <interactant intactId="EBI-3957229">
        <id>P47972</id>
        <label>NPTX2</label>
    </interactant>
    <organismsDiffer>false</organismsDiffer>
    <experiments>9</experiments>
</comment>
<comment type="interaction">
    <interactant intactId="EBI-8754490">
        <id>O60353</id>
    </interactant>
    <interactant intactId="EBI-3940687">
        <id>Q8N474</id>
        <label>SFRP1</label>
    </interactant>
    <organismsDiffer>false</organismsDiffer>
    <experiments>3</experiments>
</comment>
<comment type="interaction">
    <interactant intactId="EBI-8754490">
        <id>O60353</id>
    </interactant>
    <interactant intactId="EBI-949772">
        <id>Q9ULT6</id>
        <label>ZNRF3</label>
    </interactant>
    <organismsDiffer>false</organismsDiffer>
    <experiments>2</experiments>
</comment>
<comment type="subcellular location">
    <subcellularLocation>
        <location evidence="2">Membrane</location>
        <topology evidence="3">Multi-pass membrane protein</topology>
    </subcellularLocation>
    <subcellularLocation>
        <location evidence="2">Cell membrane</location>
        <topology evidence="3">Multi-pass membrane protein</topology>
    </subcellularLocation>
    <subcellularLocation>
        <location evidence="2">Cell surface</location>
    </subcellularLocation>
    <subcellularLocation>
        <location>Apical cell membrane</location>
        <topology evidence="3">Multi-pass membrane protein</topology>
    </subcellularLocation>
    <subcellularLocation>
        <location evidence="2">Cytoplasmic vesicle membrane</location>
        <topology evidence="3">Multi-pass membrane protein</topology>
    </subcellularLocation>
    <subcellularLocation>
        <location evidence="2">Endoplasmic reticulum membrane</location>
        <topology evidence="3">Multi-pass membrane protein</topology>
    </subcellularLocation>
    <text evidence="2">Colocalizes with FZD3 at the apical face of cells (By similarity). Localizes to the endoplasmic reticulum membrane in the presence of LMBR1L (By similarity).</text>
</comment>
<comment type="alternative products">
    <event type="alternative splicing"/>
    <isoform>
        <id>O60353-1</id>
        <name>1</name>
        <sequence type="displayed"/>
    </isoform>
    <isoform>
        <id>O60353-2</id>
        <name>2</name>
        <sequence type="described" ref="VSP_044291"/>
    </isoform>
</comment>
<comment type="tissue specificity">
    <text>Detected in adult heart, brain, placenta, lung, liver, skeletal muscle, kidney, pancreas, thymus, prostate, testis, ovary, small intestine and colon. In the fetus, expressed in brain, lung, liver and kidney.</text>
</comment>
<comment type="domain">
    <text evidence="1">Lys-Thr-X-X-X-Trp motif interacts with the PDZ domain of Dvl (Disheveled) family members and is involved in the activation of the Wnt/beta-catenin signaling pathway.</text>
</comment>
<comment type="domain">
    <text evidence="1">The FZ domain is involved in binding with Wnt ligands.</text>
</comment>
<comment type="PTM">
    <text evidence="1">Ubiquitinated by ZNRF3, leading to its degradation by the proteasome.</text>
</comment>
<comment type="disease" evidence="8">
    <disease id="DI-03199">
        <name>Nail disorder, non-syndromic congenital, 1</name>
        <acronym>NDNC1</acronym>
        <description>An autosomal recessive nail disorder characterized by a variable degree of onychauxis (thick nails), hyponychia, and onycholysis of all nails, with claw-shaped fingernails in some individuals. No other anomalies of ectodermal tissues, including hair, teeth, sweat glands, or skin, are noted, and individuals with dysplastic nails have normal hearing and normal psychomotor development.</description>
        <dbReference type="MIM" id="161050"/>
    </disease>
    <text>The disease is caused by variants affecting the gene represented in this entry.</text>
</comment>
<comment type="disease">
    <text>Rare non-synonymous variants in FZD6 may contribute to neural tube defects, congenital malformations of the central nervous system and adjacent structures related to defective neural tube closure during the first trimester of pregnancy.</text>
</comment>
<comment type="similarity">
    <text evidence="13">Belongs to the G-protein coupled receptor Fz/Smo family.</text>
</comment>
<keyword id="KW-0002">3D-structure</keyword>
<keyword id="KW-0025">Alternative splicing</keyword>
<keyword id="KW-1003">Cell membrane</keyword>
<keyword id="KW-0968">Cytoplasmic vesicle</keyword>
<keyword id="KW-0217">Developmental protein</keyword>
<keyword id="KW-0225">Disease variant</keyword>
<keyword id="KW-1015">Disulfide bond</keyword>
<keyword id="KW-0256">Endoplasmic reticulum</keyword>
<keyword id="KW-0297">G-protein coupled receptor</keyword>
<keyword id="KW-0325">Glycoprotein</keyword>
<keyword id="KW-0472">Membrane</keyword>
<keyword id="KW-0597">Phosphoprotein</keyword>
<keyword id="KW-1267">Proteomics identification</keyword>
<keyword id="KW-0675">Receptor</keyword>
<keyword id="KW-1185">Reference proteome</keyword>
<keyword id="KW-0732">Signal</keyword>
<keyword id="KW-0807">Transducer</keyword>
<keyword id="KW-0812">Transmembrane</keyword>
<keyword id="KW-1133">Transmembrane helix</keyword>
<keyword id="KW-0832">Ubl conjugation</keyword>
<keyword id="KW-0879">Wnt signaling pathway</keyword>
<proteinExistence type="evidence at protein level"/>
<dbReference type="EMBL" id="AB012911">
    <property type="protein sequence ID" value="BAA25686.1"/>
    <property type="molecule type" value="mRNA"/>
</dbReference>
<dbReference type="EMBL" id="AF072873">
    <property type="protein sequence ID" value="AAD41637.1"/>
    <property type="molecule type" value="mRNA"/>
</dbReference>
<dbReference type="EMBL" id="AF363578">
    <property type="protein sequence ID" value="AAL50384.1"/>
    <property type="molecule type" value="Genomic_DNA"/>
</dbReference>
<dbReference type="EMBL" id="AB065702">
    <property type="protein sequence ID" value="BAC05925.1"/>
    <property type="molecule type" value="Genomic_DNA"/>
</dbReference>
<dbReference type="EMBL" id="AK299341">
    <property type="protein sequence ID" value="BAG61342.1"/>
    <property type="molecule type" value="mRNA"/>
</dbReference>
<dbReference type="EMBL" id="BX640609">
    <property type="protein sequence ID" value="CAE45715.1"/>
    <property type="molecule type" value="mRNA"/>
</dbReference>
<dbReference type="EMBL" id="AC025370">
    <property type="status" value="NOT_ANNOTATED_CDS"/>
    <property type="molecule type" value="Genomic_DNA"/>
</dbReference>
<dbReference type="EMBL" id="CH471060">
    <property type="protein sequence ID" value="EAW91867.1"/>
    <property type="molecule type" value="Genomic_DNA"/>
</dbReference>
<dbReference type="EMBL" id="BC060836">
    <property type="protein sequence ID" value="AAH60836.2"/>
    <property type="molecule type" value="mRNA"/>
</dbReference>
<dbReference type="CCDS" id="CCDS55268.1">
    <molecule id="O60353-2"/>
</dbReference>
<dbReference type="CCDS" id="CCDS6298.1">
    <molecule id="O60353-1"/>
</dbReference>
<dbReference type="PIR" id="JE0164">
    <property type="entry name" value="JE0164"/>
</dbReference>
<dbReference type="RefSeq" id="NP_001158087.1">
    <molecule id="O60353-1"/>
    <property type="nucleotide sequence ID" value="NM_001164615.2"/>
</dbReference>
<dbReference type="RefSeq" id="NP_001158088.1">
    <molecule id="O60353-2"/>
    <property type="nucleotide sequence ID" value="NM_001164616.2"/>
</dbReference>
<dbReference type="RefSeq" id="NP_001304725.1">
    <property type="nucleotide sequence ID" value="NM_001317796.1"/>
</dbReference>
<dbReference type="RefSeq" id="NP_003497.2">
    <molecule id="O60353-1"/>
    <property type="nucleotide sequence ID" value="NM_003506.3"/>
</dbReference>
<dbReference type="PDB" id="8JH7">
    <property type="method" value="EM"/>
    <property type="resolution" value="3.20 A"/>
    <property type="chains" value="D=18-396, D=408-510"/>
</dbReference>
<dbReference type="PDB" id="8JHB">
    <property type="method" value="EM"/>
    <property type="resolution" value="3.30 A"/>
    <property type="chains" value="R=19-525"/>
</dbReference>
<dbReference type="PDBsum" id="8JH7"/>
<dbReference type="PDBsum" id="8JHB"/>
<dbReference type="EMDB" id="EMD-36258"/>
<dbReference type="EMDB" id="EMD-36261"/>
<dbReference type="SMR" id="O60353"/>
<dbReference type="BioGRID" id="113919">
    <property type="interactions" value="91"/>
</dbReference>
<dbReference type="DIP" id="DIP-59893N"/>
<dbReference type="FunCoup" id="O60353">
    <property type="interactions" value="1170"/>
</dbReference>
<dbReference type="IntAct" id="O60353">
    <property type="interactions" value="45"/>
</dbReference>
<dbReference type="MINT" id="O60353"/>
<dbReference type="STRING" id="9606.ENSP00000351605"/>
<dbReference type="GuidetoPHARMACOLOGY" id="234"/>
<dbReference type="CarbonylDB" id="O60353"/>
<dbReference type="GlyConnect" id="2042">
    <property type="glycosylation" value="2 N-Linked glycans (1 site)"/>
</dbReference>
<dbReference type="GlyCosmos" id="O60353">
    <property type="glycosylation" value="4 sites, 5 glycans"/>
</dbReference>
<dbReference type="GlyGen" id="O60353">
    <property type="glycosylation" value="8 sites, 4 N-linked glycans (1 site), 3 O-linked glycans (6 sites)"/>
</dbReference>
<dbReference type="iPTMnet" id="O60353"/>
<dbReference type="PhosphoSitePlus" id="O60353"/>
<dbReference type="SwissPalm" id="O60353"/>
<dbReference type="BioMuta" id="FZD6"/>
<dbReference type="jPOST" id="O60353"/>
<dbReference type="MassIVE" id="O60353"/>
<dbReference type="PaxDb" id="9606-ENSP00000351605"/>
<dbReference type="PeptideAtlas" id="O60353"/>
<dbReference type="ProteomicsDB" id="49378">
    <molecule id="O60353-1"/>
</dbReference>
<dbReference type="ProteomicsDB" id="4963"/>
<dbReference type="ABCD" id="O60353">
    <property type="antibodies" value="7 sequenced antibodies"/>
</dbReference>
<dbReference type="Antibodypedia" id="2906">
    <property type="antibodies" value="347 antibodies from 37 providers"/>
</dbReference>
<dbReference type="DNASU" id="8323"/>
<dbReference type="Ensembl" id="ENST00000358755.5">
    <molecule id="O60353-1"/>
    <property type="protein sequence ID" value="ENSP00000351605.4"/>
    <property type="gene ID" value="ENSG00000164930.12"/>
</dbReference>
<dbReference type="Ensembl" id="ENST00000522566.5">
    <molecule id="O60353-1"/>
    <property type="protein sequence ID" value="ENSP00000429055.1"/>
    <property type="gene ID" value="ENSG00000164930.12"/>
</dbReference>
<dbReference type="Ensembl" id="ENST00000523739.5">
    <molecule id="O60353-2"/>
    <property type="protein sequence ID" value="ENSP00000429528.1"/>
    <property type="gene ID" value="ENSG00000164930.12"/>
</dbReference>
<dbReference type="GeneID" id="8323"/>
<dbReference type="KEGG" id="hsa:8323"/>
<dbReference type="MANE-Select" id="ENST00000358755.5">
    <property type="protein sequence ID" value="ENSP00000351605.4"/>
    <property type="RefSeq nucleotide sequence ID" value="NM_003506.4"/>
    <property type="RefSeq protein sequence ID" value="NP_003497.2"/>
</dbReference>
<dbReference type="UCSC" id="uc003ylh.4">
    <molecule id="O60353-1"/>
    <property type="organism name" value="human"/>
</dbReference>
<dbReference type="AGR" id="HGNC:4044"/>
<dbReference type="CTD" id="8323"/>
<dbReference type="DisGeNET" id="8323"/>
<dbReference type="GeneCards" id="FZD6"/>
<dbReference type="HGNC" id="HGNC:4044">
    <property type="gene designation" value="FZD6"/>
</dbReference>
<dbReference type="HPA" id="ENSG00000164930">
    <property type="expression patterns" value="Low tissue specificity"/>
</dbReference>
<dbReference type="MalaCards" id="FZD6"/>
<dbReference type="MIM" id="161050">
    <property type="type" value="phenotype"/>
</dbReference>
<dbReference type="MIM" id="603409">
    <property type="type" value="gene"/>
</dbReference>
<dbReference type="neXtProt" id="NX_O60353"/>
<dbReference type="OpenTargets" id="ENSG00000164930"/>
<dbReference type="Orphanet" id="280654">
    <property type="disease" value="Autosomal recessive nail dysplasia"/>
</dbReference>
<dbReference type="PharmGKB" id="PA28461"/>
<dbReference type="VEuPathDB" id="HostDB:ENSG00000164930"/>
<dbReference type="eggNOG" id="KOG3577">
    <property type="taxonomic scope" value="Eukaryota"/>
</dbReference>
<dbReference type="GeneTree" id="ENSGT00940000158485"/>
<dbReference type="HOGENOM" id="CLU_007873_4_0_1"/>
<dbReference type="InParanoid" id="O60353"/>
<dbReference type="OMA" id="FLKHNNR"/>
<dbReference type="OrthoDB" id="10053709at2759"/>
<dbReference type="PAN-GO" id="O60353">
    <property type="GO annotations" value="6 GO annotations based on evolutionary models"/>
</dbReference>
<dbReference type="PhylomeDB" id="O60353"/>
<dbReference type="TreeFam" id="TF317907"/>
<dbReference type="PathwayCommons" id="O60353"/>
<dbReference type="Reactome" id="R-HSA-373080">
    <property type="pathway name" value="Class B/2 (Secretin family receptors)"/>
</dbReference>
<dbReference type="Reactome" id="R-HSA-4086398">
    <property type="pathway name" value="Ca2+ pathway"/>
</dbReference>
<dbReference type="Reactome" id="R-HSA-4086400">
    <property type="pathway name" value="PCP/CE pathway"/>
</dbReference>
<dbReference type="Reactome" id="R-HSA-4641263">
    <property type="pathway name" value="Regulation of FZD by ubiquitination"/>
</dbReference>
<dbReference type="Reactome" id="R-HSA-5340588">
    <property type="pathway name" value="Signaling by RNF43 mutants"/>
</dbReference>
<dbReference type="SignaLink" id="O60353"/>
<dbReference type="SIGNOR" id="O60353"/>
<dbReference type="BioGRID-ORCS" id="8323">
    <property type="hits" value="9 hits in 1157 CRISPR screens"/>
</dbReference>
<dbReference type="ChiTaRS" id="FZD6">
    <property type="organism name" value="human"/>
</dbReference>
<dbReference type="GeneWiki" id="FZD6"/>
<dbReference type="GenomeRNAi" id="8323"/>
<dbReference type="Pharos" id="O60353">
    <property type="development level" value="Tbio"/>
</dbReference>
<dbReference type="PRO" id="PR:O60353"/>
<dbReference type="Proteomes" id="UP000005640">
    <property type="component" value="Chromosome 8"/>
</dbReference>
<dbReference type="RNAct" id="O60353">
    <property type="molecule type" value="protein"/>
</dbReference>
<dbReference type="Bgee" id="ENSG00000164930">
    <property type="expression patterns" value="Expressed in bronchial epithelial cell and 176 other cell types or tissues"/>
</dbReference>
<dbReference type="ExpressionAtlas" id="O60353">
    <property type="expression patterns" value="baseline and differential"/>
</dbReference>
<dbReference type="GO" id="GO:0016324">
    <property type="term" value="C:apical plasma membrane"/>
    <property type="evidence" value="ECO:0007669"/>
    <property type="project" value="UniProtKB-SubCell"/>
</dbReference>
<dbReference type="GO" id="GO:0016327">
    <property type="term" value="C:apicolateral plasma membrane"/>
    <property type="evidence" value="ECO:0007669"/>
    <property type="project" value="Ensembl"/>
</dbReference>
<dbReference type="GO" id="GO:0009986">
    <property type="term" value="C:cell surface"/>
    <property type="evidence" value="ECO:0007669"/>
    <property type="project" value="UniProtKB-SubCell"/>
</dbReference>
<dbReference type="GO" id="GO:0036064">
    <property type="term" value="C:ciliary basal body"/>
    <property type="evidence" value="ECO:0000314"/>
    <property type="project" value="HPA"/>
</dbReference>
<dbReference type="GO" id="GO:0005929">
    <property type="term" value="C:cilium"/>
    <property type="evidence" value="ECO:0000314"/>
    <property type="project" value="HPA"/>
</dbReference>
<dbReference type="GO" id="GO:0030659">
    <property type="term" value="C:cytoplasmic vesicle membrane"/>
    <property type="evidence" value="ECO:0007669"/>
    <property type="project" value="UniProtKB-SubCell"/>
</dbReference>
<dbReference type="GO" id="GO:0005789">
    <property type="term" value="C:endoplasmic reticulum membrane"/>
    <property type="evidence" value="ECO:0000250"/>
    <property type="project" value="UniProtKB"/>
</dbReference>
<dbReference type="GO" id="GO:0005886">
    <property type="term" value="C:plasma membrane"/>
    <property type="evidence" value="ECO:0000314"/>
    <property type="project" value="HPA"/>
</dbReference>
<dbReference type="GO" id="GO:0004930">
    <property type="term" value="F:G protein-coupled receptor activity"/>
    <property type="evidence" value="ECO:0007669"/>
    <property type="project" value="UniProtKB-KW"/>
</dbReference>
<dbReference type="GO" id="GO:0031625">
    <property type="term" value="F:ubiquitin protein ligase binding"/>
    <property type="evidence" value="ECO:0000353"/>
    <property type="project" value="UniProtKB"/>
</dbReference>
<dbReference type="GO" id="GO:0042813">
    <property type="term" value="F:Wnt receptor activity"/>
    <property type="evidence" value="ECO:0000314"/>
    <property type="project" value="BHF-UCL"/>
</dbReference>
<dbReference type="GO" id="GO:0017147">
    <property type="term" value="F:Wnt-protein binding"/>
    <property type="evidence" value="ECO:0000250"/>
    <property type="project" value="BHF-UCL"/>
</dbReference>
<dbReference type="GO" id="GO:0060070">
    <property type="term" value="P:canonical Wnt signaling pathway"/>
    <property type="evidence" value="ECO:0000318"/>
    <property type="project" value="GO_Central"/>
</dbReference>
<dbReference type="GO" id="GO:0033278">
    <property type="term" value="P:cell proliferation in midbrain"/>
    <property type="evidence" value="ECO:0007669"/>
    <property type="project" value="Ensembl"/>
</dbReference>
<dbReference type="GO" id="GO:0035880">
    <property type="term" value="P:embryonic nail plate morphogenesis"/>
    <property type="evidence" value="ECO:0007669"/>
    <property type="project" value="Ensembl"/>
</dbReference>
<dbReference type="GO" id="GO:0048105">
    <property type="term" value="P:establishment of body hair planar orientation"/>
    <property type="evidence" value="ECO:0007669"/>
    <property type="project" value="Ensembl"/>
</dbReference>
<dbReference type="GO" id="GO:0001942">
    <property type="term" value="P:hair follicle development"/>
    <property type="evidence" value="ECO:0007669"/>
    <property type="project" value="Ensembl"/>
</dbReference>
<dbReference type="GO" id="GO:0042472">
    <property type="term" value="P:inner ear morphogenesis"/>
    <property type="evidence" value="ECO:0007669"/>
    <property type="project" value="Ensembl"/>
</dbReference>
<dbReference type="GO" id="GO:1904693">
    <property type="term" value="P:midbrain morphogenesis"/>
    <property type="evidence" value="ECO:0000304"/>
    <property type="project" value="ParkinsonsUK-UCL"/>
</dbReference>
<dbReference type="GO" id="GO:0090090">
    <property type="term" value="P:negative regulation of canonical Wnt signaling pathway"/>
    <property type="evidence" value="ECO:0000315"/>
    <property type="project" value="BHF-UCL"/>
</dbReference>
<dbReference type="GO" id="GO:0000122">
    <property type="term" value="P:negative regulation of transcription by RNA polymerase II"/>
    <property type="evidence" value="ECO:0000314"/>
    <property type="project" value="BHF-UCL"/>
</dbReference>
<dbReference type="GO" id="GO:0001843">
    <property type="term" value="P:neural tube closure"/>
    <property type="evidence" value="ECO:0007669"/>
    <property type="project" value="Ensembl"/>
</dbReference>
<dbReference type="GO" id="GO:0035567">
    <property type="term" value="P:non-canonical Wnt signaling pathway"/>
    <property type="evidence" value="ECO:0000314"/>
    <property type="project" value="BHF-UCL"/>
</dbReference>
<dbReference type="GO" id="GO:0030168">
    <property type="term" value="P:platelet activation"/>
    <property type="evidence" value="ECO:0007669"/>
    <property type="project" value="Ensembl"/>
</dbReference>
<dbReference type="GO" id="GO:0060071">
    <property type="term" value="P:Wnt signaling pathway, planar cell polarity pathway"/>
    <property type="evidence" value="ECO:0000303"/>
    <property type="project" value="ParkinsonsUK-UCL"/>
</dbReference>
<dbReference type="CDD" id="cd15032">
    <property type="entry name" value="7tmF_FZD6"/>
    <property type="match status" value="1"/>
</dbReference>
<dbReference type="CDD" id="cd07450">
    <property type="entry name" value="CRD_FZ6"/>
    <property type="match status" value="1"/>
</dbReference>
<dbReference type="FunFam" id="1.20.1070.10:FF:000036">
    <property type="entry name" value="frizzled-3 isoform X1"/>
    <property type="match status" value="1"/>
</dbReference>
<dbReference type="FunFam" id="1.10.2000.10:FF:000014">
    <property type="entry name" value="frizzled-6 isoform X1"/>
    <property type="match status" value="1"/>
</dbReference>
<dbReference type="Gene3D" id="1.10.2000.10">
    <property type="entry name" value="Frizzled cysteine-rich domain"/>
    <property type="match status" value="1"/>
</dbReference>
<dbReference type="Gene3D" id="1.20.1070.10">
    <property type="entry name" value="Rhodopsin 7-helix transmembrane proteins"/>
    <property type="match status" value="1"/>
</dbReference>
<dbReference type="InterPro" id="IPR015526">
    <property type="entry name" value="Frizzled/SFRP"/>
</dbReference>
<dbReference type="InterPro" id="IPR000539">
    <property type="entry name" value="Frizzled/Smoothened_7TM"/>
</dbReference>
<dbReference type="InterPro" id="IPR020067">
    <property type="entry name" value="Frizzled_dom"/>
</dbReference>
<dbReference type="InterPro" id="IPR036790">
    <property type="entry name" value="Frizzled_dom_sf"/>
</dbReference>
<dbReference type="InterPro" id="IPR041770">
    <property type="entry name" value="FZ6_CRD"/>
</dbReference>
<dbReference type="InterPro" id="IPR026543">
    <property type="entry name" value="FZD6_7TM"/>
</dbReference>
<dbReference type="InterPro" id="IPR017981">
    <property type="entry name" value="GPCR_2-like_7TM"/>
</dbReference>
<dbReference type="PANTHER" id="PTHR11309">
    <property type="entry name" value="FRIZZLED"/>
    <property type="match status" value="1"/>
</dbReference>
<dbReference type="PANTHER" id="PTHR11309:SF75">
    <property type="entry name" value="FRIZZLED-6"/>
    <property type="match status" value="1"/>
</dbReference>
<dbReference type="Pfam" id="PF01534">
    <property type="entry name" value="Frizzled"/>
    <property type="match status" value="1"/>
</dbReference>
<dbReference type="Pfam" id="PF01392">
    <property type="entry name" value="Fz"/>
    <property type="match status" value="1"/>
</dbReference>
<dbReference type="PRINTS" id="PR00489">
    <property type="entry name" value="FRIZZLED"/>
</dbReference>
<dbReference type="SMART" id="SM00063">
    <property type="entry name" value="FRI"/>
    <property type="match status" value="1"/>
</dbReference>
<dbReference type="SMART" id="SM01330">
    <property type="entry name" value="Frizzled"/>
    <property type="match status" value="1"/>
</dbReference>
<dbReference type="SUPFAM" id="SSF63501">
    <property type="entry name" value="Frizzled cysteine-rich domain"/>
    <property type="match status" value="1"/>
</dbReference>
<dbReference type="PROSITE" id="PS50038">
    <property type="entry name" value="FZ"/>
    <property type="match status" value="1"/>
</dbReference>
<dbReference type="PROSITE" id="PS50261">
    <property type="entry name" value="G_PROTEIN_RECEP_F2_4"/>
    <property type="match status" value="1"/>
</dbReference>
<reference key="1">
    <citation type="journal article" date="1998" name="Biochem. Biophys. Res. Commun.">
        <title>Molecular cloning of human frizzled-6.</title>
        <authorList>
            <person name="Tokuhara M."/>
            <person name="Hirai M."/>
            <person name="Atomi Y."/>
            <person name="Terada M."/>
            <person name="Katoh M."/>
        </authorList>
    </citation>
    <scope>NUCLEOTIDE SEQUENCE [MRNA] (ISOFORM 1)</scope>
    <scope>VARIANT LEU-345</scope>
    <source>
        <tissue>Fetal lung</tissue>
    </source>
</reference>
<reference key="2">
    <citation type="submission" date="1998-06" db="EMBL/GenBank/DDBJ databases">
        <title>Molecular cloning of the human Frizzled 6.</title>
        <authorList>
            <person name="Gazit A."/>
            <person name="Yaniv A."/>
            <person name="Aaronson S.A."/>
        </authorList>
    </citation>
    <scope>NUCLEOTIDE SEQUENCE [MRNA] (ISOFORM 1)</scope>
    <scope>VARIANT LEU-345</scope>
</reference>
<reference key="3">
    <citation type="journal article" date="2001" name="Proc. Natl. Acad. Sci. U.S.A.">
        <title>BAALC, the human member of a novel mammalian neuroectoderm gene lineage, is implicated in hematopoiesis and acute leukemia.</title>
        <authorList>
            <person name="Tanner S.M."/>
            <person name="Austin J.L."/>
            <person name="Leone G."/>
            <person name="Rush L.J."/>
            <person name="Plass C."/>
            <person name="Heinonen K."/>
            <person name="Mrozek K."/>
            <person name="Sill H."/>
            <person name="Knuutila S."/>
            <person name="Kolitz J.E."/>
            <person name="Archer K.J."/>
            <person name="Caligiuri M.A."/>
            <person name="Bloomfield C.D."/>
            <person name="de La Chapelle A."/>
        </authorList>
    </citation>
    <scope>NUCLEOTIDE SEQUENCE [GENOMIC DNA]</scope>
</reference>
<reference key="4">
    <citation type="submission" date="2001-07" db="EMBL/GenBank/DDBJ databases">
        <title>Genome-wide discovery and analysis of human seven transmembrane helix receptor genes.</title>
        <authorList>
            <person name="Suwa M."/>
            <person name="Sato T."/>
            <person name="Okouchi I."/>
            <person name="Arita M."/>
            <person name="Futami K."/>
            <person name="Matsumoto S."/>
            <person name="Tsutsumi S."/>
            <person name="Aburatani H."/>
            <person name="Asai K."/>
            <person name="Akiyama Y."/>
        </authorList>
    </citation>
    <scope>NUCLEOTIDE SEQUENCE [GENOMIC DNA]</scope>
</reference>
<reference key="5">
    <citation type="journal article" date="2004" name="Nat. Genet.">
        <title>Complete sequencing and characterization of 21,243 full-length human cDNAs.</title>
        <authorList>
            <person name="Ota T."/>
            <person name="Suzuki Y."/>
            <person name="Nishikawa T."/>
            <person name="Otsuki T."/>
            <person name="Sugiyama T."/>
            <person name="Irie R."/>
            <person name="Wakamatsu A."/>
            <person name="Hayashi K."/>
            <person name="Sato H."/>
            <person name="Nagai K."/>
            <person name="Kimura K."/>
            <person name="Makita H."/>
            <person name="Sekine M."/>
            <person name="Obayashi M."/>
            <person name="Nishi T."/>
            <person name="Shibahara T."/>
            <person name="Tanaka T."/>
            <person name="Ishii S."/>
            <person name="Yamamoto J."/>
            <person name="Saito K."/>
            <person name="Kawai Y."/>
            <person name="Isono Y."/>
            <person name="Nakamura Y."/>
            <person name="Nagahari K."/>
            <person name="Murakami K."/>
            <person name="Yasuda T."/>
            <person name="Iwayanagi T."/>
            <person name="Wagatsuma M."/>
            <person name="Shiratori A."/>
            <person name="Sudo H."/>
            <person name="Hosoiri T."/>
            <person name="Kaku Y."/>
            <person name="Kodaira H."/>
            <person name="Kondo H."/>
            <person name="Sugawara M."/>
            <person name="Takahashi M."/>
            <person name="Kanda K."/>
            <person name="Yokoi T."/>
            <person name="Furuya T."/>
            <person name="Kikkawa E."/>
            <person name="Omura Y."/>
            <person name="Abe K."/>
            <person name="Kamihara K."/>
            <person name="Katsuta N."/>
            <person name="Sato K."/>
            <person name="Tanikawa M."/>
            <person name="Yamazaki M."/>
            <person name="Ninomiya K."/>
            <person name="Ishibashi T."/>
            <person name="Yamashita H."/>
            <person name="Murakawa K."/>
            <person name="Fujimori K."/>
            <person name="Tanai H."/>
            <person name="Kimata M."/>
            <person name="Watanabe M."/>
            <person name="Hiraoka S."/>
            <person name="Chiba Y."/>
            <person name="Ishida S."/>
            <person name="Ono Y."/>
            <person name="Takiguchi S."/>
            <person name="Watanabe S."/>
            <person name="Yosida M."/>
            <person name="Hotuta T."/>
            <person name="Kusano J."/>
            <person name="Kanehori K."/>
            <person name="Takahashi-Fujii A."/>
            <person name="Hara H."/>
            <person name="Tanase T.-O."/>
            <person name="Nomura Y."/>
            <person name="Togiya S."/>
            <person name="Komai F."/>
            <person name="Hara R."/>
            <person name="Takeuchi K."/>
            <person name="Arita M."/>
            <person name="Imose N."/>
            <person name="Musashino K."/>
            <person name="Yuuki H."/>
            <person name="Oshima A."/>
            <person name="Sasaki N."/>
            <person name="Aotsuka S."/>
            <person name="Yoshikawa Y."/>
            <person name="Matsunawa H."/>
            <person name="Ichihara T."/>
            <person name="Shiohata N."/>
            <person name="Sano S."/>
            <person name="Moriya S."/>
            <person name="Momiyama H."/>
            <person name="Satoh N."/>
            <person name="Takami S."/>
            <person name="Terashima Y."/>
            <person name="Suzuki O."/>
            <person name="Nakagawa S."/>
            <person name="Senoh A."/>
            <person name="Mizoguchi H."/>
            <person name="Goto Y."/>
            <person name="Shimizu F."/>
            <person name="Wakebe H."/>
            <person name="Hishigaki H."/>
            <person name="Watanabe T."/>
            <person name="Sugiyama A."/>
            <person name="Takemoto M."/>
            <person name="Kawakami B."/>
            <person name="Yamazaki M."/>
            <person name="Watanabe K."/>
            <person name="Kumagai A."/>
            <person name="Itakura S."/>
            <person name="Fukuzumi Y."/>
            <person name="Fujimori Y."/>
            <person name="Komiyama M."/>
            <person name="Tashiro H."/>
            <person name="Tanigami A."/>
            <person name="Fujiwara T."/>
            <person name="Ono T."/>
            <person name="Yamada K."/>
            <person name="Fujii Y."/>
            <person name="Ozaki K."/>
            <person name="Hirao M."/>
            <person name="Ohmori Y."/>
            <person name="Kawabata A."/>
            <person name="Hikiji T."/>
            <person name="Kobatake N."/>
            <person name="Inagaki H."/>
            <person name="Ikema Y."/>
            <person name="Okamoto S."/>
            <person name="Okitani R."/>
            <person name="Kawakami T."/>
            <person name="Noguchi S."/>
            <person name="Itoh T."/>
            <person name="Shigeta K."/>
            <person name="Senba T."/>
            <person name="Matsumura K."/>
            <person name="Nakajima Y."/>
            <person name="Mizuno T."/>
            <person name="Morinaga M."/>
            <person name="Sasaki M."/>
            <person name="Togashi T."/>
            <person name="Oyama M."/>
            <person name="Hata H."/>
            <person name="Watanabe M."/>
            <person name="Komatsu T."/>
            <person name="Mizushima-Sugano J."/>
            <person name="Satoh T."/>
            <person name="Shirai Y."/>
            <person name="Takahashi Y."/>
            <person name="Nakagawa K."/>
            <person name="Okumura K."/>
            <person name="Nagase T."/>
            <person name="Nomura N."/>
            <person name="Kikuchi H."/>
            <person name="Masuho Y."/>
            <person name="Yamashita R."/>
            <person name="Nakai K."/>
            <person name="Yada T."/>
            <person name="Nakamura Y."/>
            <person name="Ohara O."/>
            <person name="Isogai T."/>
            <person name="Sugano S."/>
        </authorList>
    </citation>
    <scope>NUCLEOTIDE SEQUENCE [LARGE SCALE MRNA] (ISOFORM 2)</scope>
</reference>
<reference key="6">
    <citation type="journal article" date="2007" name="BMC Genomics">
        <title>The full-ORF clone resource of the German cDNA consortium.</title>
        <authorList>
            <person name="Bechtel S."/>
            <person name="Rosenfelder H."/>
            <person name="Duda A."/>
            <person name="Schmidt C.P."/>
            <person name="Ernst U."/>
            <person name="Wellenreuther R."/>
            <person name="Mehrle A."/>
            <person name="Schuster C."/>
            <person name="Bahr A."/>
            <person name="Bloecker H."/>
            <person name="Heubner D."/>
            <person name="Hoerlein A."/>
            <person name="Michel G."/>
            <person name="Wedler H."/>
            <person name="Koehrer K."/>
            <person name="Ottenwaelder B."/>
            <person name="Poustka A."/>
            <person name="Wiemann S."/>
            <person name="Schupp I."/>
        </authorList>
    </citation>
    <scope>NUCLEOTIDE SEQUENCE [LARGE SCALE MRNA] (ISOFORM 1)</scope>
    <scope>VARIANT VAL-33</scope>
    <source>
        <tissue>Uterine endothelium</tissue>
    </source>
</reference>
<reference key="7">
    <citation type="journal article" date="2006" name="Nature">
        <title>DNA sequence and analysis of human chromosome 8.</title>
        <authorList>
            <person name="Nusbaum C."/>
            <person name="Mikkelsen T.S."/>
            <person name="Zody M.C."/>
            <person name="Asakawa S."/>
            <person name="Taudien S."/>
            <person name="Garber M."/>
            <person name="Kodira C.D."/>
            <person name="Schueler M.G."/>
            <person name="Shimizu A."/>
            <person name="Whittaker C.A."/>
            <person name="Chang J.L."/>
            <person name="Cuomo C.A."/>
            <person name="Dewar K."/>
            <person name="FitzGerald M.G."/>
            <person name="Yang X."/>
            <person name="Allen N.R."/>
            <person name="Anderson S."/>
            <person name="Asakawa T."/>
            <person name="Blechschmidt K."/>
            <person name="Bloom T."/>
            <person name="Borowsky M.L."/>
            <person name="Butler J."/>
            <person name="Cook A."/>
            <person name="Corum B."/>
            <person name="DeArellano K."/>
            <person name="DeCaprio D."/>
            <person name="Dooley K.T."/>
            <person name="Dorris L. III"/>
            <person name="Engels R."/>
            <person name="Gloeckner G."/>
            <person name="Hafez N."/>
            <person name="Hagopian D.S."/>
            <person name="Hall J.L."/>
            <person name="Ishikawa S.K."/>
            <person name="Jaffe D.B."/>
            <person name="Kamat A."/>
            <person name="Kudoh J."/>
            <person name="Lehmann R."/>
            <person name="Lokitsang T."/>
            <person name="Macdonald P."/>
            <person name="Major J.E."/>
            <person name="Matthews C.D."/>
            <person name="Mauceli E."/>
            <person name="Menzel U."/>
            <person name="Mihalev A.H."/>
            <person name="Minoshima S."/>
            <person name="Murayama Y."/>
            <person name="Naylor J.W."/>
            <person name="Nicol R."/>
            <person name="Nguyen C."/>
            <person name="O'Leary S.B."/>
            <person name="O'Neill K."/>
            <person name="Parker S.C.J."/>
            <person name="Polley A."/>
            <person name="Raymond C.K."/>
            <person name="Reichwald K."/>
            <person name="Rodriguez J."/>
            <person name="Sasaki T."/>
            <person name="Schilhabel M."/>
            <person name="Siddiqui R."/>
            <person name="Smith C.L."/>
            <person name="Sneddon T.P."/>
            <person name="Talamas J.A."/>
            <person name="Tenzin P."/>
            <person name="Topham K."/>
            <person name="Venkataraman V."/>
            <person name="Wen G."/>
            <person name="Yamazaki S."/>
            <person name="Young S.K."/>
            <person name="Zeng Q."/>
            <person name="Zimmer A.R."/>
            <person name="Rosenthal A."/>
            <person name="Birren B.W."/>
            <person name="Platzer M."/>
            <person name="Shimizu N."/>
            <person name="Lander E.S."/>
        </authorList>
    </citation>
    <scope>NUCLEOTIDE SEQUENCE [LARGE SCALE GENOMIC DNA]</scope>
</reference>
<reference key="8">
    <citation type="submission" date="2005-07" db="EMBL/GenBank/DDBJ databases">
        <authorList>
            <person name="Mural R.J."/>
            <person name="Istrail S."/>
            <person name="Sutton G.G."/>
            <person name="Florea L."/>
            <person name="Halpern A.L."/>
            <person name="Mobarry C.M."/>
            <person name="Lippert R."/>
            <person name="Walenz B."/>
            <person name="Shatkay H."/>
            <person name="Dew I."/>
            <person name="Miller J.R."/>
            <person name="Flanigan M.J."/>
            <person name="Edwards N.J."/>
            <person name="Bolanos R."/>
            <person name="Fasulo D."/>
            <person name="Halldorsson B.V."/>
            <person name="Hannenhalli S."/>
            <person name="Turner R."/>
            <person name="Yooseph S."/>
            <person name="Lu F."/>
            <person name="Nusskern D.R."/>
            <person name="Shue B.C."/>
            <person name="Zheng X.H."/>
            <person name="Zhong F."/>
            <person name="Delcher A.L."/>
            <person name="Huson D.H."/>
            <person name="Kravitz S.A."/>
            <person name="Mouchard L."/>
            <person name="Reinert K."/>
            <person name="Remington K.A."/>
            <person name="Clark A.G."/>
            <person name="Waterman M.S."/>
            <person name="Eichler E.E."/>
            <person name="Adams M.D."/>
            <person name="Hunkapiller M.W."/>
            <person name="Myers E.W."/>
            <person name="Venter J.C."/>
        </authorList>
    </citation>
    <scope>NUCLEOTIDE SEQUENCE [LARGE SCALE GENOMIC DNA]</scope>
</reference>
<reference key="9">
    <citation type="journal article" date="2004" name="Genome Res.">
        <title>The status, quality, and expansion of the NIH full-length cDNA project: the Mammalian Gene Collection (MGC).</title>
        <authorList>
            <consortium name="The MGC Project Team"/>
        </authorList>
    </citation>
    <scope>NUCLEOTIDE SEQUENCE [LARGE SCALE MRNA] (ISOFORM 1)</scope>
    <scope>VARIANT LEU-345</scope>
    <source>
        <tissue>Placenta</tissue>
    </source>
</reference>
<reference key="10">
    <citation type="journal article" date="2008" name="Proc. Natl. Acad. Sci. U.S.A.">
        <title>A quantitative atlas of mitotic phosphorylation.</title>
        <authorList>
            <person name="Dephoure N."/>
            <person name="Zhou C."/>
            <person name="Villen J."/>
            <person name="Beausoleil S.A."/>
            <person name="Bakalarski C.E."/>
            <person name="Elledge S.J."/>
            <person name="Gygi S.P."/>
        </authorList>
    </citation>
    <scope>IDENTIFICATION BY MASS SPECTROMETRY [LARGE SCALE ANALYSIS]</scope>
    <source>
        <tissue>Cervix carcinoma</tissue>
    </source>
</reference>
<reference key="11">
    <citation type="journal article" date="2012" name="Hum. Mutat.">
        <title>FZD6 is a novel gene for human neural tube defects.</title>
        <authorList>
            <person name="De Marco P."/>
            <person name="Merello E."/>
            <person name="Rossi A."/>
            <person name="Piatelli G."/>
            <person name="Cama A."/>
            <person name="Kibar Z."/>
            <person name="Capra V."/>
        </authorList>
    </citation>
    <scope>POSSIBLE INVOLVEMENT IN NEURAL TUBE DEFECTS</scope>
    <scope>VARIANTS VAL-33; TYR-140; GLU-152; LEU-345; ASP-388; GLN-405; CYS-511; HIS-511; ARG-604; THR-620 AND GLU-664</scope>
</reference>
<reference key="12">
    <citation type="journal article" date="2012" name="Nature">
        <title>ZNRF3 promotes Wnt receptor turnover in an R-spondin-sensitive manner.</title>
        <authorList>
            <person name="Hao H.X."/>
            <person name="Xie Y."/>
            <person name="Zhang Y."/>
            <person name="Charlat O."/>
            <person name="Oster E."/>
            <person name="Avello M."/>
            <person name="Lei H."/>
            <person name="Mickanin C."/>
            <person name="Liu D."/>
            <person name="Ruffner H."/>
            <person name="Mao X."/>
            <person name="Ma Q."/>
            <person name="Zamponi R."/>
            <person name="Bouwmeester T."/>
            <person name="Finan P.M."/>
            <person name="Kirschner M.W."/>
            <person name="Porter J.A."/>
            <person name="Serluca F.C."/>
            <person name="Cong F."/>
        </authorList>
    </citation>
    <scope>UBIQUITINATION BY ZNRF3</scope>
</reference>
<reference key="13">
    <citation type="journal article" date="2011" name="Am. J. Hum. Genet.">
        <title>Mutations in Frizzled 6 cause isolated autosomal-recessive nail dysplasia.</title>
        <authorList>
            <person name="Frojmark A.S."/>
            <person name="Schuster J."/>
            <person name="Sobol M."/>
            <person name="Entesarian M."/>
            <person name="Kilander M.B."/>
            <person name="Gabrikova D."/>
            <person name="Nawaz S."/>
            <person name="Baig S.M."/>
            <person name="Schulte G."/>
            <person name="Klar J."/>
            <person name="Dahl N."/>
        </authorList>
    </citation>
    <scope>VARIANT NDNC1 CYS-511</scope>
    <scope>CHARACTERIZATION OF VARIANT NDNC1 CYS-511</scope>
</reference>
<evidence type="ECO:0000250" key="1"/>
<evidence type="ECO:0000250" key="2">
    <source>
        <dbReference type="UniProtKB" id="Q61089"/>
    </source>
</evidence>
<evidence type="ECO:0000255" key="3"/>
<evidence type="ECO:0000255" key="4">
    <source>
        <dbReference type="PROSITE-ProRule" id="PRU00090"/>
    </source>
</evidence>
<evidence type="ECO:0000256" key="5">
    <source>
        <dbReference type="SAM" id="MobiDB-lite"/>
    </source>
</evidence>
<evidence type="ECO:0000269" key="6">
    <source>
    </source>
</evidence>
<evidence type="ECO:0000269" key="7">
    <source>
    </source>
</evidence>
<evidence type="ECO:0000269" key="8">
    <source>
    </source>
</evidence>
<evidence type="ECO:0000269" key="9">
    <source>
    </source>
</evidence>
<evidence type="ECO:0000269" key="10">
    <source>
    </source>
</evidence>
<evidence type="ECO:0000269" key="11">
    <source ref="2"/>
</evidence>
<evidence type="ECO:0000303" key="12">
    <source>
    </source>
</evidence>
<evidence type="ECO:0000305" key="13"/>
<evidence type="ECO:0007829" key="14">
    <source>
        <dbReference type="PDB" id="8JH7"/>
    </source>
</evidence>
<evidence type="ECO:0007829" key="15">
    <source>
        <dbReference type="PDB" id="8JHB"/>
    </source>
</evidence>